<comment type="function">
    <text evidence="1">Catalyzes the conversion of dethiobiotin (DTB) to biotin by the insertion of a sulfur atom into dethiobiotin via a radical-based mechanism.</text>
</comment>
<comment type="catalytic activity">
    <reaction evidence="1">
        <text>(4R,5S)-dethiobiotin + (sulfur carrier)-SH + 2 reduced [2Fe-2S]-[ferredoxin] + 2 S-adenosyl-L-methionine = (sulfur carrier)-H + biotin + 2 5'-deoxyadenosine + 2 L-methionine + 2 oxidized [2Fe-2S]-[ferredoxin]</text>
        <dbReference type="Rhea" id="RHEA:22060"/>
        <dbReference type="Rhea" id="RHEA-COMP:10000"/>
        <dbReference type="Rhea" id="RHEA-COMP:10001"/>
        <dbReference type="Rhea" id="RHEA-COMP:14737"/>
        <dbReference type="Rhea" id="RHEA-COMP:14739"/>
        <dbReference type="ChEBI" id="CHEBI:17319"/>
        <dbReference type="ChEBI" id="CHEBI:29917"/>
        <dbReference type="ChEBI" id="CHEBI:33737"/>
        <dbReference type="ChEBI" id="CHEBI:33738"/>
        <dbReference type="ChEBI" id="CHEBI:57586"/>
        <dbReference type="ChEBI" id="CHEBI:57844"/>
        <dbReference type="ChEBI" id="CHEBI:59789"/>
        <dbReference type="ChEBI" id="CHEBI:64428"/>
        <dbReference type="ChEBI" id="CHEBI:149473"/>
        <dbReference type="EC" id="2.8.1.6"/>
    </reaction>
</comment>
<comment type="cofactor">
    <cofactor evidence="1">
        <name>[4Fe-4S] cluster</name>
        <dbReference type="ChEBI" id="CHEBI:49883"/>
    </cofactor>
    <text evidence="1">Binds 1 [4Fe-4S] cluster. The cluster is coordinated with 3 cysteines and an exchangeable S-adenosyl-L-methionine.</text>
</comment>
<comment type="cofactor">
    <cofactor evidence="1">
        <name>[2Fe-2S] cluster</name>
        <dbReference type="ChEBI" id="CHEBI:190135"/>
    </cofactor>
    <text evidence="1">Binds 1 [2Fe-2S] cluster. The cluster is coordinated with 3 cysteines and 1 arginine.</text>
</comment>
<comment type="pathway">
    <text evidence="1">Cofactor biosynthesis; biotin biosynthesis; biotin from 7,8-diaminononanoate: step 2/2.</text>
</comment>
<comment type="subunit">
    <text evidence="1">Homodimer.</text>
</comment>
<comment type="similarity">
    <text evidence="1">Belongs to the radical SAM superfamily. Biotin synthase family.</text>
</comment>
<name>BIOB_YERPN</name>
<feature type="chain" id="PRO_0000381725" description="Biotin synthase">
    <location>
        <begin position="1"/>
        <end position="345"/>
    </location>
</feature>
<feature type="domain" description="Radical SAM core" evidence="2">
    <location>
        <begin position="38"/>
        <end position="256"/>
    </location>
</feature>
<feature type="binding site" evidence="1">
    <location>
        <position position="53"/>
    </location>
    <ligand>
        <name>[4Fe-4S] cluster</name>
        <dbReference type="ChEBI" id="CHEBI:49883"/>
        <note>4Fe-4S-S-AdoMet</note>
    </ligand>
</feature>
<feature type="binding site" evidence="1">
    <location>
        <position position="57"/>
    </location>
    <ligand>
        <name>[4Fe-4S] cluster</name>
        <dbReference type="ChEBI" id="CHEBI:49883"/>
        <note>4Fe-4S-S-AdoMet</note>
    </ligand>
</feature>
<feature type="binding site" evidence="1">
    <location>
        <position position="60"/>
    </location>
    <ligand>
        <name>[4Fe-4S] cluster</name>
        <dbReference type="ChEBI" id="CHEBI:49883"/>
        <note>4Fe-4S-S-AdoMet</note>
    </ligand>
</feature>
<feature type="binding site" evidence="1">
    <location>
        <position position="97"/>
    </location>
    <ligand>
        <name>[2Fe-2S] cluster</name>
        <dbReference type="ChEBI" id="CHEBI:190135"/>
    </ligand>
</feature>
<feature type="binding site" evidence="1">
    <location>
        <position position="128"/>
    </location>
    <ligand>
        <name>[2Fe-2S] cluster</name>
        <dbReference type="ChEBI" id="CHEBI:190135"/>
    </ligand>
</feature>
<feature type="binding site" evidence="1">
    <location>
        <position position="188"/>
    </location>
    <ligand>
        <name>[2Fe-2S] cluster</name>
        <dbReference type="ChEBI" id="CHEBI:190135"/>
    </ligand>
</feature>
<feature type="binding site" evidence="1">
    <location>
        <position position="260"/>
    </location>
    <ligand>
        <name>[2Fe-2S] cluster</name>
        <dbReference type="ChEBI" id="CHEBI:190135"/>
    </ligand>
</feature>
<organism>
    <name type="scientific">Yersinia pestis bv. Antiqua (strain Nepal516)</name>
    <dbReference type="NCBI Taxonomy" id="377628"/>
    <lineage>
        <taxon>Bacteria</taxon>
        <taxon>Pseudomonadati</taxon>
        <taxon>Pseudomonadota</taxon>
        <taxon>Gammaproteobacteria</taxon>
        <taxon>Enterobacterales</taxon>
        <taxon>Yersiniaceae</taxon>
        <taxon>Yersinia</taxon>
    </lineage>
</organism>
<evidence type="ECO:0000255" key="1">
    <source>
        <dbReference type="HAMAP-Rule" id="MF_01694"/>
    </source>
</evidence>
<evidence type="ECO:0000255" key="2">
    <source>
        <dbReference type="PROSITE-ProRule" id="PRU01266"/>
    </source>
</evidence>
<proteinExistence type="inferred from homology"/>
<sequence>MATYHHWTVGQALALFDKPLLELLFEAQQVHRQHFDPRQVQVSTLLSIKTGACPEDCKYCPQSSRYKTGLESERLMQVEQVLESAKKAKAAGSTRFCMGAAWKNPHERDMPYLAKMVEGVKALGMETCMTLGSLSKQQAHRLADAGLDYYNHNLDTSPEFYGSIITTRSYQERLDTLNEVRDAGIKVCSGGIVGLGETVRDRAGLLVQLANLPKPPESVPINMLVKVKGTPLENNAEVDAFEFIRTIAVARIMMPSSYVRLSAGREQMNEQTQAMCFMAGANSIFYGCKLLTTPNPDEDKDLQLFRKLGLNPQQTATSHGDREQQQALTEQLLHGDTAQFYNAAV</sequence>
<keyword id="KW-0001">2Fe-2S</keyword>
<keyword id="KW-0004">4Fe-4S</keyword>
<keyword id="KW-0093">Biotin biosynthesis</keyword>
<keyword id="KW-0408">Iron</keyword>
<keyword id="KW-0411">Iron-sulfur</keyword>
<keyword id="KW-0479">Metal-binding</keyword>
<keyword id="KW-0949">S-adenosyl-L-methionine</keyword>
<keyword id="KW-0808">Transferase</keyword>
<accession>Q1CFQ3</accession>
<gene>
    <name evidence="1" type="primary">bioB</name>
    <name type="ordered locus">YPN_2850</name>
    <name type="ORF">YP516_3223</name>
</gene>
<protein>
    <recommendedName>
        <fullName evidence="1">Biotin synthase</fullName>
        <ecNumber evidence="1">2.8.1.6</ecNumber>
    </recommendedName>
</protein>
<dbReference type="EC" id="2.8.1.6" evidence="1"/>
<dbReference type="EMBL" id="CP000305">
    <property type="protein sequence ID" value="ABG19177.1"/>
    <property type="molecule type" value="Genomic_DNA"/>
</dbReference>
<dbReference type="EMBL" id="ACNQ01000017">
    <property type="protein sequence ID" value="EEO75321.1"/>
    <property type="molecule type" value="Genomic_DNA"/>
</dbReference>
<dbReference type="RefSeq" id="WP_002210762.1">
    <property type="nucleotide sequence ID" value="NZ_ACNQ01000017.1"/>
</dbReference>
<dbReference type="SMR" id="Q1CFQ3"/>
<dbReference type="GeneID" id="57977290"/>
<dbReference type="KEGG" id="ypn:YPN_2850"/>
<dbReference type="HOGENOM" id="CLU_033172_1_2_6"/>
<dbReference type="UniPathway" id="UPA00078">
    <property type="reaction ID" value="UER00162"/>
</dbReference>
<dbReference type="Proteomes" id="UP000008936">
    <property type="component" value="Chromosome"/>
</dbReference>
<dbReference type="GO" id="GO:0051537">
    <property type="term" value="F:2 iron, 2 sulfur cluster binding"/>
    <property type="evidence" value="ECO:0007669"/>
    <property type="project" value="UniProtKB-KW"/>
</dbReference>
<dbReference type="GO" id="GO:0051539">
    <property type="term" value="F:4 iron, 4 sulfur cluster binding"/>
    <property type="evidence" value="ECO:0007669"/>
    <property type="project" value="UniProtKB-KW"/>
</dbReference>
<dbReference type="GO" id="GO:0004076">
    <property type="term" value="F:biotin synthase activity"/>
    <property type="evidence" value="ECO:0007669"/>
    <property type="project" value="UniProtKB-UniRule"/>
</dbReference>
<dbReference type="GO" id="GO:0005506">
    <property type="term" value="F:iron ion binding"/>
    <property type="evidence" value="ECO:0007669"/>
    <property type="project" value="UniProtKB-UniRule"/>
</dbReference>
<dbReference type="GO" id="GO:0009102">
    <property type="term" value="P:biotin biosynthetic process"/>
    <property type="evidence" value="ECO:0007669"/>
    <property type="project" value="UniProtKB-UniRule"/>
</dbReference>
<dbReference type="CDD" id="cd01335">
    <property type="entry name" value="Radical_SAM"/>
    <property type="match status" value="1"/>
</dbReference>
<dbReference type="FunFam" id="3.20.20.70:FF:000011">
    <property type="entry name" value="Biotin synthase"/>
    <property type="match status" value="1"/>
</dbReference>
<dbReference type="Gene3D" id="3.20.20.70">
    <property type="entry name" value="Aldolase class I"/>
    <property type="match status" value="1"/>
</dbReference>
<dbReference type="HAMAP" id="MF_01694">
    <property type="entry name" value="BioB"/>
    <property type="match status" value="1"/>
</dbReference>
<dbReference type="InterPro" id="IPR013785">
    <property type="entry name" value="Aldolase_TIM"/>
</dbReference>
<dbReference type="InterPro" id="IPR010722">
    <property type="entry name" value="BATS_dom"/>
</dbReference>
<dbReference type="InterPro" id="IPR002684">
    <property type="entry name" value="Biotin_synth/BioAB"/>
</dbReference>
<dbReference type="InterPro" id="IPR024177">
    <property type="entry name" value="Biotin_synthase"/>
</dbReference>
<dbReference type="InterPro" id="IPR006638">
    <property type="entry name" value="Elp3/MiaA/NifB-like_rSAM"/>
</dbReference>
<dbReference type="InterPro" id="IPR007197">
    <property type="entry name" value="rSAM"/>
</dbReference>
<dbReference type="NCBIfam" id="TIGR00433">
    <property type="entry name" value="bioB"/>
    <property type="match status" value="1"/>
</dbReference>
<dbReference type="PANTHER" id="PTHR22976">
    <property type="entry name" value="BIOTIN SYNTHASE"/>
    <property type="match status" value="1"/>
</dbReference>
<dbReference type="PANTHER" id="PTHR22976:SF2">
    <property type="entry name" value="BIOTIN SYNTHASE, MITOCHONDRIAL"/>
    <property type="match status" value="1"/>
</dbReference>
<dbReference type="Pfam" id="PF06968">
    <property type="entry name" value="BATS"/>
    <property type="match status" value="1"/>
</dbReference>
<dbReference type="Pfam" id="PF04055">
    <property type="entry name" value="Radical_SAM"/>
    <property type="match status" value="1"/>
</dbReference>
<dbReference type="PIRSF" id="PIRSF001619">
    <property type="entry name" value="Biotin_synth"/>
    <property type="match status" value="1"/>
</dbReference>
<dbReference type="SFLD" id="SFLDF00272">
    <property type="entry name" value="biotin_synthase"/>
    <property type="match status" value="1"/>
</dbReference>
<dbReference type="SFLD" id="SFLDS00029">
    <property type="entry name" value="Radical_SAM"/>
    <property type="match status" value="1"/>
</dbReference>
<dbReference type="SMART" id="SM00876">
    <property type="entry name" value="BATS"/>
    <property type="match status" value="1"/>
</dbReference>
<dbReference type="SMART" id="SM00729">
    <property type="entry name" value="Elp3"/>
    <property type="match status" value="1"/>
</dbReference>
<dbReference type="SUPFAM" id="SSF102114">
    <property type="entry name" value="Radical SAM enzymes"/>
    <property type="match status" value="1"/>
</dbReference>
<dbReference type="PROSITE" id="PS51918">
    <property type="entry name" value="RADICAL_SAM"/>
    <property type="match status" value="1"/>
</dbReference>
<reference key="1">
    <citation type="journal article" date="2006" name="J. Bacteriol.">
        <title>Complete genome sequence of Yersinia pestis strains Antiqua and Nepal516: evidence of gene reduction in an emerging pathogen.</title>
        <authorList>
            <person name="Chain P.S.G."/>
            <person name="Hu P."/>
            <person name="Malfatti S.A."/>
            <person name="Radnedge L."/>
            <person name="Larimer F."/>
            <person name="Vergez L.M."/>
            <person name="Worsham P."/>
            <person name="Chu M.C."/>
            <person name="Andersen G.L."/>
        </authorList>
    </citation>
    <scope>NUCLEOTIDE SEQUENCE [LARGE SCALE GENOMIC DNA]</scope>
    <source>
        <strain>Nepal516</strain>
    </source>
</reference>
<reference key="2">
    <citation type="submission" date="2009-04" db="EMBL/GenBank/DDBJ databases">
        <title>Yersinia pestis Nepal516A whole genome shotgun sequencing project.</title>
        <authorList>
            <person name="Plunkett G. III"/>
            <person name="Anderson B.D."/>
            <person name="Baumler D.J."/>
            <person name="Burland V."/>
            <person name="Cabot E.L."/>
            <person name="Glasner J.D."/>
            <person name="Mau B."/>
            <person name="Neeno-Eckwall E."/>
            <person name="Perna N.T."/>
            <person name="Munk A.C."/>
            <person name="Tapia R."/>
            <person name="Green L.D."/>
            <person name="Rogers Y.C."/>
            <person name="Detter J.C."/>
            <person name="Bruce D.C."/>
            <person name="Brettin T.S."/>
        </authorList>
    </citation>
    <scope>NUCLEOTIDE SEQUENCE [LARGE SCALE GENOMIC DNA]</scope>
    <source>
        <strain>Nepal516</strain>
    </source>
</reference>